<keyword id="KW-0456">Lyase</keyword>
<keyword id="KW-0663">Pyridoxal phosphate</keyword>
<keyword id="KW-1185">Reference proteome</keyword>
<gene>
    <name evidence="3" type="primary">iboG2</name>
    <name type="ORF">M378DRAFT_88863</name>
</gene>
<protein>
    <recommendedName>
        <fullName evidence="3">Cystathionine gamma-synthase-like enzyme iboG2</fullName>
        <ecNumber evidence="5">4.4.-.-</ecNumber>
    </recommendedName>
    <alternativeName>
        <fullName evidence="3">Ibotenic acid biosynthesis cluster protein G2</fullName>
    </alternativeName>
</protein>
<sequence>MGLSRTMTAIQLNSSIPLGLPVPPHTPHAISVSLPTWSETVAYKEGIKHINDALLNGYPRMFIQLNVRKLSSLLEQKFGINGERCMLFPTYKVAEQCQLFMQARSVGARIVGLLICPEGKQNNRVIECKEPANLSESTSSASTNLYVVLFPPDMFSIANQFWQHSGQGISSRLTDHCLSILTENAAHANGSSLSPLTFPGNSHVAPEQLEVGHDVDLEGRCGGPLLADAAIAKQVLRQRIAGLLIRYGSCDYRAELCVGKKNLEGNQNSRDFADVTENDVYLFPTGMTAIWNAHQLALAVRPTAKSVCFGFPYSDTLKVLQKWGPGCHFFAGGTDSEIDELEIILEQEFARDSTKPPVLALFTEFPSNPLLCSPNLLRLRALADKYDFLLAIDETIGNFVNVEVLPYADILLTSLSKIFSGNANVMGGSLVLNPNGRHYTALKAHIAAHYQDIYYPEDAIHMEWNSRDFEQRIKIIDDNAEAICDFLRPHSVAAGATNAVIKEVFYPKYITPENYERCLTKGTNHDLSSSPSNGGGGYGGLFSLTFTSGAASAAFYDALSCFKGPSLGTNFTLACTYTLLAHFKELEWAAQYGVEAGLVRISVGTENTEALLRTIEAALGAAKEAKGL</sequence>
<comment type="function">
    <text evidence="2 5">Cystathionine gamma-synthase-like enzyme; part of the gene cluster that mediates the biosynthesis of the psychoactive metabolites ibotenic acid and muscimol (PubMed:32233056). The first committed step is glutamate hydroxylation by the 2-oxoglutarate-dependent dioxygenase iboH, and the last step is decarboxylation of ibotenic acid to muscimol by the decarboxylase iboD (PubMed:32233056). The order of the intermediate reactions is somewhat ambiguous (Probable). IboA likely activates the carboxylic acid at position 5 to introduce an amide bond, and the flavin monooxygenase iboF generates the N-O bond (Probable). There are several options for the latter step (Probable). One option is that iboF directly hydroxylates the amide nitrogen formed by iboA to produce a hydroxamic acid species (Probable). Another option is that iboF hydroxylates an external N-containing compound, whose resulting N-O bond is subsequently introduced into the hydroxyglutamate scaffold (Probable). The paralogous PLP-dependent cystathionine gamma-synthase-like enzymes iboG1 and iboG2 are likely involved in substitution of the OH group at position 3 by the O-N moiety (Probable). The first cyclic intermediate is most probably tricholomic acid which is likely desaturated to ibotenic acid by the cytochrome P450 monooxygenase iboC (Probable).</text>
</comment>
<comment type="cofactor">
    <cofactor evidence="1">
        <name>pyridoxal 5'-phosphate</name>
        <dbReference type="ChEBI" id="CHEBI:597326"/>
    </cofactor>
</comment>
<comment type="pathway">
    <text evidence="5">Secondary metabolite biosynthesis.</text>
</comment>
<comment type="induction">
    <text evidence="2">Expression is highly induced during artificial growth in symbiosis with Populus, which is close to its natural condition.</text>
</comment>
<comment type="similarity">
    <text evidence="4">Belongs to the trans-sulfuration enzymes family.</text>
</comment>
<evidence type="ECO:0000250" key="1">
    <source>
        <dbReference type="UniProtKB" id="P32929"/>
    </source>
</evidence>
<evidence type="ECO:0000269" key="2">
    <source>
    </source>
</evidence>
<evidence type="ECO:0000303" key="3">
    <source>
    </source>
</evidence>
<evidence type="ECO:0000305" key="4"/>
<evidence type="ECO:0000305" key="5">
    <source>
    </source>
</evidence>
<feature type="chain" id="PRO_0000454919" description="Cystathionine gamma-synthase-like enzyme iboG2">
    <location>
        <begin position="1"/>
        <end position="628"/>
    </location>
</feature>
<feature type="binding site" evidence="1">
    <location>
        <position position="313"/>
    </location>
    <ligand>
        <name>substrate</name>
    </ligand>
</feature>
<feature type="modified residue" description="N6-(pyridoxal phosphate)lysine" evidence="1">
    <location>
        <position position="417"/>
    </location>
</feature>
<dbReference type="EC" id="4.4.-.-" evidence="5"/>
<dbReference type="EMBL" id="KN818402">
    <property type="protein sequence ID" value="KIL56740.1"/>
    <property type="molecule type" value="Genomic_DNA"/>
</dbReference>
<dbReference type="SMR" id="A0A0C2S258"/>
<dbReference type="FunCoup" id="A0A0C2S258">
    <property type="interactions" value="120"/>
</dbReference>
<dbReference type="STRING" id="946122.A0A0C2S258"/>
<dbReference type="HOGENOM" id="CLU_011302_1_0_1"/>
<dbReference type="InParanoid" id="A0A0C2S258"/>
<dbReference type="OrthoDB" id="10047078at2759"/>
<dbReference type="Proteomes" id="UP000054549">
    <property type="component" value="Unassembled WGS sequence"/>
</dbReference>
<dbReference type="GO" id="GO:0003962">
    <property type="term" value="F:cystathionine gamma-synthase activity"/>
    <property type="evidence" value="ECO:0007669"/>
    <property type="project" value="TreeGrafter"/>
</dbReference>
<dbReference type="GO" id="GO:0016829">
    <property type="term" value="F:lyase activity"/>
    <property type="evidence" value="ECO:0007669"/>
    <property type="project" value="UniProtKB-KW"/>
</dbReference>
<dbReference type="GO" id="GO:0030170">
    <property type="term" value="F:pyridoxal phosphate binding"/>
    <property type="evidence" value="ECO:0007669"/>
    <property type="project" value="InterPro"/>
</dbReference>
<dbReference type="GO" id="GO:0019346">
    <property type="term" value="P:transsulfuration"/>
    <property type="evidence" value="ECO:0007669"/>
    <property type="project" value="InterPro"/>
</dbReference>
<dbReference type="FunFam" id="3.90.1150.10:FF:000063">
    <property type="entry name" value="Probable cystathionine gamma-synthase"/>
    <property type="match status" value="1"/>
</dbReference>
<dbReference type="Gene3D" id="3.90.1150.10">
    <property type="entry name" value="Aspartate Aminotransferase, domain 1"/>
    <property type="match status" value="1"/>
</dbReference>
<dbReference type="Gene3D" id="3.40.640.10">
    <property type="entry name" value="Type I PLP-dependent aspartate aminotransferase-like (Major domain)"/>
    <property type="match status" value="1"/>
</dbReference>
<dbReference type="InterPro" id="IPR000277">
    <property type="entry name" value="Cys/Met-Metab_PyrdxlP-dep_enz"/>
</dbReference>
<dbReference type="InterPro" id="IPR015424">
    <property type="entry name" value="PyrdxlP-dep_Trfase"/>
</dbReference>
<dbReference type="InterPro" id="IPR015421">
    <property type="entry name" value="PyrdxlP-dep_Trfase_major"/>
</dbReference>
<dbReference type="InterPro" id="IPR015422">
    <property type="entry name" value="PyrdxlP-dep_Trfase_small"/>
</dbReference>
<dbReference type="InterPro" id="IPR051750">
    <property type="entry name" value="Trans-sulfuration_enzymes"/>
</dbReference>
<dbReference type="PANTHER" id="PTHR42699">
    <property type="match status" value="1"/>
</dbReference>
<dbReference type="PANTHER" id="PTHR42699:SF1">
    <property type="entry name" value="CYSTATHIONINE GAMMA-SYNTHASE-RELATED"/>
    <property type="match status" value="1"/>
</dbReference>
<dbReference type="Pfam" id="PF01053">
    <property type="entry name" value="Cys_Met_Meta_PP"/>
    <property type="match status" value="1"/>
</dbReference>
<dbReference type="SUPFAM" id="SSF53383">
    <property type="entry name" value="PLP-dependent transferases"/>
    <property type="match status" value="1"/>
</dbReference>
<accession>A0A0C2S258</accession>
<reference key="1">
    <citation type="journal article" date="2015" name="Nat. Genet.">
        <title>Convergent losses of decay mechanisms and rapid turnover of symbiosis genes in mycorrhizal mutualists.</title>
        <authorList>
            <consortium name="Mycorrhizal Genomics Initiative Consortium"/>
            <person name="Kohler A."/>
            <person name="Kuo A."/>
            <person name="Nagy L.G."/>
            <person name="Morin E."/>
            <person name="Barry K.W."/>
            <person name="Buscot F."/>
            <person name="Canbaeck B."/>
            <person name="Choi C."/>
            <person name="Cichocki N."/>
            <person name="Clum A."/>
            <person name="Colpaert J."/>
            <person name="Copeland A."/>
            <person name="Costa M.D."/>
            <person name="Dore J."/>
            <person name="Floudas D."/>
            <person name="Gay G."/>
            <person name="Girlanda M."/>
            <person name="Henrissat B."/>
            <person name="Herrmann S."/>
            <person name="Hess J."/>
            <person name="Hoegberg N."/>
            <person name="Johansson T."/>
            <person name="Khouja H.R."/>
            <person name="LaButti K."/>
            <person name="Lahrmann U."/>
            <person name="Levasseur A."/>
            <person name="Lindquist E.A."/>
            <person name="Lipzen A."/>
            <person name="Marmeisse R."/>
            <person name="Martino E."/>
            <person name="Murat C."/>
            <person name="Ngan C.Y."/>
            <person name="Nehls U."/>
            <person name="Plett J.M."/>
            <person name="Pringle A."/>
            <person name="Ohm R.A."/>
            <person name="Perotto S."/>
            <person name="Peter M."/>
            <person name="Riley R."/>
            <person name="Rineau F."/>
            <person name="Ruytinx J."/>
            <person name="Salamov A."/>
            <person name="Shah F."/>
            <person name="Sun H."/>
            <person name="Tarkka M."/>
            <person name="Tritt A."/>
            <person name="Veneault-Fourrey C."/>
            <person name="Zuccaro A."/>
            <person name="Tunlid A."/>
            <person name="Grigoriev I.V."/>
            <person name="Hibbett D.S."/>
            <person name="Martin F."/>
        </authorList>
    </citation>
    <scope>NUCLEOTIDE SEQUENCE [LARGE SCALE GENOMIC DNA]</scope>
    <source>
        <strain>Koide BX008</strain>
    </source>
</reference>
<reference key="2">
    <citation type="journal article" date="2020" name="Angew. Chem. Int. Ed.">
        <title>Ibotenic acid biosynthesis in the fly agaric is initiated by glutamate hydroxylation.</title>
        <authorList>
            <person name="Obermaier S."/>
            <person name="Mueller M."/>
        </authorList>
    </citation>
    <scope>FUNCTION</scope>
    <scope>INDUCTION</scope>
    <scope>PATHWAY</scope>
</reference>
<proteinExistence type="evidence at transcript level"/>
<organism>
    <name type="scientific">Amanita muscaria (strain Koide BX008)</name>
    <dbReference type="NCBI Taxonomy" id="946122"/>
    <lineage>
        <taxon>Eukaryota</taxon>
        <taxon>Fungi</taxon>
        <taxon>Dikarya</taxon>
        <taxon>Basidiomycota</taxon>
        <taxon>Agaricomycotina</taxon>
        <taxon>Agaricomycetes</taxon>
        <taxon>Agaricomycetidae</taxon>
        <taxon>Agaricales</taxon>
        <taxon>Pluteineae</taxon>
        <taxon>Amanitaceae</taxon>
        <taxon>Amanita</taxon>
    </lineage>
</organism>
<name>IBOG2_AMAMK</name>